<keyword id="KW-0025">Alternative splicing</keyword>
<keyword id="KW-0053">Apoptosis</keyword>
<keyword id="KW-0067">ATP-binding</keyword>
<keyword id="KW-0418">Kinase</keyword>
<keyword id="KW-0460">Magnesium</keyword>
<keyword id="KW-0479">Metal-binding</keyword>
<keyword id="KW-0546">Nucleotide metabolism</keyword>
<keyword id="KW-0547">Nucleotide-binding</keyword>
<keyword id="KW-1267">Proteomics identification</keyword>
<keyword id="KW-1185">Reference proteome</keyword>
<keyword id="KW-0808">Transferase</keyword>
<feature type="chain" id="PRO_0000137127" description="Nucleoside diphosphate kinase 6">
    <location>
        <begin position="1"/>
        <end position="186"/>
    </location>
</feature>
<feature type="active site" description="Pros-phosphohistidine intermediate" evidence="2">
    <location>
        <position position="129"/>
    </location>
</feature>
<feature type="binding site" evidence="1">
    <location>
        <position position="19"/>
    </location>
    <ligand>
        <name>ATP</name>
        <dbReference type="ChEBI" id="CHEBI:30616"/>
    </ligand>
</feature>
<feature type="binding site" evidence="1">
    <location>
        <position position="68"/>
    </location>
    <ligand>
        <name>ATP</name>
        <dbReference type="ChEBI" id="CHEBI:30616"/>
    </ligand>
</feature>
<feature type="binding site" evidence="1">
    <location>
        <position position="96"/>
    </location>
    <ligand>
        <name>ATP</name>
        <dbReference type="ChEBI" id="CHEBI:30616"/>
    </ligand>
</feature>
<feature type="binding site" evidence="1">
    <location>
        <position position="102"/>
    </location>
    <ligand>
        <name>ATP</name>
        <dbReference type="ChEBI" id="CHEBI:30616"/>
    </ligand>
</feature>
<feature type="binding site" evidence="1">
    <location>
        <position position="116"/>
    </location>
    <ligand>
        <name>ATP</name>
        <dbReference type="ChEBI" id="CHEBI:30616"/>
    </ligand>
</feature>
<feature type="binding site" evidence="1">
    <location>
        <position position="126"/>
    </location>
    <ligand>
        <name>ATP</name>
        <dbReference type="ChEBI" id="CHEBI:30616"/>
    </ligand>
</feature>
<feature type="splice variant" id="VSP_036883" description="In isoform 3." evidence="3">
    <original>GRFFYQRLVEFMASGPIRAYILAHKDAIQLWRTLMGPTRVFRARHVAPDSIRGSFGLTDTRNTTHGSDSVVSASREIAAFFPDFSEQRWYEEEEPQLRCGPVCYSPEGGVHYVAGTGGLGPA</original>
    <variation>AGQSEPTSLPTRMPSSSGGRSWDPPECSEHAMWPQILSVGVSASLTPATPPMVRTLWFQPAERLQPSSLTSVNSAGMRRKSPSCAVALCAIAQREVSTM</variation>
    <location>
        <begin position="65"/>
        <end position="186"/>
    </location>
</feature>
<feature type="splice variant" id="VSP_036882" description="In isoform 2." evidence="3">
    <location>
        <begin position="65"/>
        <end position="131"/>
    </location>
</feature>
<feature type="sequence conflict" description="In Ref. 3; BAD96275." evidence="4" ref="3">
    <original>G</original>
    <variation>S</variation>
    <location>
        <position position="182"/>
    </location>
</feature>
<evidence type="ECO:0000250" key="1"/>
<evidence type="ECO:0000255" key="2">
    <source>
        <dbReference type="PROSITE-ProRule" id="PRU10030"/>
    </source>
</evidence>
<evidence type="ECO:0000303" key="3">
    <source>
    </source>
</evidence>
<evidence type="ECO:0000305" key="4"/>
<comment type="function">
    <text>Major role in the synthesis of nucleoside triphosphates other than ATP. The ATP gamma phosphate is transferred to the NDP beta phosphate via a ping-pong mechanism, using a phosphorylated active-site intermediate. Inhibitor of p53-induced apoptosis.</text>
</comment>
<comment type="catalytic activity">
    <reaction evidence="2">
        <text>a 2'-deoxyribonucleoside 5'-diphosphate + ATP = a 2'-deoxyribonucleoside 5'-triphosphate + ADP</text>
        <dbReference type="Rhea" id="RHEA:44640"/>
        <dbReference type="ChEBI" id="CHEBI:30616"/>
        <dbReference type="ChEBI" id="CHEBI:61560"/>
        <dbReference type="ChEBI" id="CHEBI:73316"/>
        <dbReference type="ChEBI" id="CHEBI:456216"/>
        <dbReference type="EC" id="2.7.4.6"/>
    </reaction>
</comment>
<comment type="catalytic activity">
    <reaction evidence="2">
        <text>a ribonucleoside 5'-diphosphate + ATP = a ribonucleoside 5'-triphosphate + ADP</text>
        <dbReference type="Rhea" id="RHEA:18113"/>
        <dbReference type="ChEBI" id="CHEBI:30616"/>
        <dbReference type="ChEBI" id="CHEBI:57930"/>
        <dbReference type="ChEBI" id="CHEBI:61557"/>
        <dbReference type="ChEBI" id="CHEBI:456216"/>
        <dbReference type="EC" id="2.7.4.6"/>
    </reaction>
</comment>
<comment type="cofactor">
    <cofactor evidence="1">
        <name>Mg(2+)</name>
        <dbReference type="ChEBI" id="CHEBI:18420"/>
    </cofactor>
</comment>
<comment type="interaction">
    <interactant intactId="EBI-3941531">
        <id>O75414</id>
    </interactant>
    <interactant intactId="EBI-2117080">
        <id>Q96I51</id>
        <label>RCC1L</label>
    </interactant>
    <organismsDiffer>false</organismsDiffer>
    <experiments>8</experiments>
</comment>
<comment type="alternative products">
    <event type="alternative splicing"/>
    <isoform>
        <id>O75414-1</id>
        <name>1</name>
        <sequence type="displayed"/>
    </isoform>
    <isoform>
        <id>O75414-2</id>
        <name>2</name>
        <sequence type="described" ref="VSP_036882"/>
    </isoform>
    <isoform>
        <id>O75414-3</id>
        <name>3</name>
        <sequence type="described" ref="VSP_036883"/>
    </isoform>
</comment>
<comment type="tissue specificity">
    <text>Expressed at a moderately low level in many tissues. Most abundant in kidney, prostate, ovary, intestine, and spleen.</text>
</comment>
<comment type="similarity">
    <text evidence="4">Belongs to the NDK family.</text>
</comment>
<comment type="sequence caution" evidence="4">
    <conflict type="erroneous initiation">
        <sequence resource="EMBL-CDS" id="AAC69439"/>
    </conflict>
</comment>
<comment type="sequence caution" evidence="4">
    <conflict type="erroneous initiation">
        <sequence resource="EMBL-CDS" id="AAH01808"/>
    </conflict>
</comment>
<comment type="sequence caution" evidence="4">
    <conflict type="erroneous initiation">
        <sequence resource="EMBL-CDS" id="AAH12828"/>
    </conflict>
</comment>
<comment type="sequence caution" evidence="4">
    <conflict type="erroneous initiation">
        <sequence resource="EMBL-CDS" id="BAD96275"/>
    </conflict>
</comment>
<dbReference type="EC" id="2.7.4.6"/>
<dbReference type="EMBL" id="AF051941">
    <property type="protein sequence ID" value="AAC78463.1"/>
    <property type="molecule type" value="mRNA"/>
</dbReference>
<dbReference type="EMBL" id="U90449">
    <property type="protein sequence ID" value="AAC69439.1"/>
    <property type="status" value="ALT_INIT"/>
    <property type="molecule type" value="mRNA"/>
</dbReference>
<dbReference type="EMBL" id="AK294809">
    <property type="protein sequence ID" value="BAG57928.1"/>
    <property type="molecule type" value="mRNA"/>
</dbReference>
<dbReference type="EMBL" id="AK297364">
    <property type="protein sequence ID" value="BAG59811.1"/>
    <property type="molecule type" value="mRNA"/>
</dbReference>
<dbReference type="EMBL" id="AK222555">
    <property type="protein sequence ID" value="BAD96275.1"/>
    <property type="status" value="ALT_INIT"/>
    <property type="molecule type" value="mRNA"/>
</dbReference>
<dbReference type="EMBL" id="AC105267">
    <property type="status" value="NOT_ANNOTATED_CDS"/>
    <property type="molecule type" value="Genomic_DNA"/>
</dbReference>
<dbReference type="EMBL" id="BC001808">
    <property type="protein sequence ID" value="AAH01808.1"/>
    <property type="status" value="ALT_INIT"/>
    <property type="molecule type" value="mRNA"/>
</dbReference>
<dbReference type="EMBL" id="BC012828">
    <property type="protein sequence ID" value="AAH12828.1"/>
    <property type="status" value="ALT_INIT"/>
    <property type="molecule type" value="mRNA"/>
</dbReference>
<dbReference type="CCDS" id="CCDS77733.1">
    <molecule id="O75414-3"/>
</dbReference>
<dbReference type="CCDS" id="CCDS77734.1">
    <molecule id="O75414-1"/>
</dbReference>
<dbReference type="CCDS" id="CCDS82768.1">
    <molecule id="O75414-2"/>
</dbReference>
<dbReference type="RefSeq" id="NP_001295355.1">
    <molecule id="O75414-1"/>
    <property type="nucleotide sequence ID" value="NM_001308426.2"/>
</dbReference>
<dbReference type="RefSeq" id="NP_001295356.1">
    <molecule id="O75414-1"/>
    <property type="nucleotide sequence ID" value="NM_001308427.2"/>
</dbReference>
<dbReference type="RefSeq" id="NP_001295357.1">
    <molecule id="O75414-1"/>
    <property type="nucleotide sequence ID" value="NM_001308428.2"/>
</dbReference>
<dbReference type="RefSeq" id="NP_001295360.1">
    <molecule id="O75414-3"/>
    <property type="nucleotide sequence ID" value="NM_001308431.2"/>
</dbReference>
<dbReference type="RefSeq" id="NP_001295362.1">
    <molecule id="O75414-3"/>
    <property type="nucleotide sequence ID" value="NM_001308433.2"/>
</dbReference>
<dbReference type="RefSeq" id="NP_001295364.1">
    <molecule id="O75414-2"/>
    <property type="nucleotide sequence ID" value="NM_001308435.2"/>
</dbReference>
<dbReference type="RefSeq" id="NP_005784.1">
    <property type="nucleotide sequence ID" value="NM_005793.4"/>
</dbReference>
<dbReference type="RefSeq" id="XP_016861003.1">
    <property type="nucleotide sequence ID" value="XM_017005514.1"/>
</dbReference>
<dbReference type="RefSeq" id="XP_016861004.1">
    <molecule id="O75414-3"/>
    <property type="nucleotide sequence ID" value="XM_017005515.2"/>
</dbReference>
<dbReference type="RefSeq" id="XP_047303129.1">
    <molecule id="O75414-1"/>
    <property type="nucleotide sequence ID" value="XM_047447173.1"/>
</dbReference>
<dbReference type="RefSeq" id="XP_047303134.1">
    <molecule id="O75414-1"/>
    <property type="nucleotide sequence ID" value="XM_047447178.1"/>
</dbReference>
<dbReference type="RefSeq" id="XP_047303135.1">
    <molecule id="O75414-3"/>
    <property type="nucleotide sequence ID" value="XM_047447179.1"/>
</dbReference>
<dbReference type="RefSeq" id="XP_054200873.1">
    <molecule id="O75414-1"/>
    <property type="nucleotide sequence ID" value="XM_054344898.1"/>
</dbReference>
<dbReference type="RefSeq" id="XP_054200874.1">
    <molecule id="O75414-1"/>
    <property type="nucleotide sequence ID" value="XM_054344899.1"/>
</dbReference>
<dbReference type="RefSeq" id="XP_054200875.1">
    <molecule id="O75414-3"/>
    <property type="nucleotide sequence ID" value="XM_054344900.1"/>
</dbReference>
<dbReference type="RefSeq" id="XP_054200876.1">
    <molecule id="O75414-3"/>
    <property type="nucleotide sequence ID" value="XM_054344901.1"/>
</dbReference>
<dbReference type="SMR" id="O75414"/>
<dbReference type="BioGRID" id="115496">
    <property type="interactions" value="20"/>
</dbReference>
<dbReference type="FunCoup" id="O75414">
    <property type="interactions" value="2443"/>
</dbReference>
<dbReference type="IntAct" id="O75414">
    <property type="interactions" value="15"/>
</dbReference>
<dbReference type="MINT" id="O75414"/>
<dbReference type="STRING" id="9606.ENSP00000416658"/>
<dbReference type="GlyGen" id="O75414">
    <property type="glycosylation" value="1 site, 1 O-linked glycan (1 site)"/>
</dbReference>
<dbReference type="iPTMnet" id="O75414"/>
<dbReference type="PhosphoSitePlus" id="O75414"/>
<dbReference type="BioMuta" id="NME6"/>
<dbReference type="jPOST" id="O75414"/>
<dbReference type="MassIVE" id="O75414"/>
<dbReference type="PaxDb" id="9606-ENSP00000416658"/>
<dbReference type="PeptideAtlas" id="O75414"/>
<dbReference type="ProteomicsDB" id="49985">
    <molecule id="O75414-1"/>
</dbReference>
<dbReference type="ProteomicsDB" id="49986">
    <molecule id="O75414-2"/>
</dbReference>
<dbReference type="ProteomicsDB" id="49987">
    <molecule id="O75414-3"/>
</dbReference>
<dbReference type="Pumba" id="O75414"/>
<dbReference type="Antibodypedia" id="13081">
    <property type="antibodies" value="189 antibodies from 24 providers"/>
</dbReference>
<dbReference type="DNASU" id="10201"/>
<dbReference type="Ensembl" id="ENST00000415053.5">
    <molecule id="O75414-1"/>
    <property type="protein sequence ID" value="ENSP00000399582.1"/>
    <property type="gene ID" value="ENSG00000172113.10"/>
</dbReference>
<dbReference type="Ensembl" id="ENST00000415644.5">
    <molecule id="O75414-2"/>
    <property type="protein sequence ID" value="ENSP00000394232.1"/>
    <property type="gene ID" value="ENSG00000172113.10"/>
</dbReference>
<dbReference type="Ensembl" id="ENST00000426689.6">
    <molecule id="O75414-1"/>
    <property type="protein sequence ID" value="ENSP00000440286.1"/>
    <property type="gene ID" value="ENSG00000172113.10"/>
</dbReference>
<dbReference type="Ensembl" id="ENST00000435684.5">
    <molecule id="O75414-3"/>
    <property type="protein sequence ID" value="ENSP00000393261.1"/>
    <property type="gene ID" value="ENSG00000172113.10"/>
</dbReference>
<dbReference type="Ensembl" id="ENST00000442597.6">
    <molecule id="O75414-1"/>
    <property type="protein sequence ID" value="ENSP00000406642.1"/>
    <property type="gene ID" value="ENSG00000172113.10"/>
</dbReference>
<dbReference type="Ensembl" id="ENST00000451657.6">
    <molecule id="O75414-3"/>
    <property type="protein sequence ID" value="ENSP00000407933.1"/>
    <property type="gene ID" value="ENSG00000172113.10"/>
</dbReference>
<dbReference type="Ensembl" id="ENST00000452211.5">
    <molecule id="O75414-1"/>
    <property type="protein sequence ID" value="ENSP00000392352.1"/>
    <property type="gene ID" value="ENSG00000172113.10"/>
</dbReference>
<dbReference type="Ensembl" id="ENST00000643457.1">
    <molecule id="O75414-1"/>
    <property type="protein sequence ID" value="ENSP00000495130.1"/>
    <property type="gene ID" value="ENSG00000172113.10"/>
</dbReference>
<dbReference type="GeneID" id="10201"/>
<dbReference type="KEGG" id="hsa:10201"/>
<dbReference type="MANE-Select" id="ENST00000442597.6">
    <property type="protein sequence ID" value="ENSP00000406642.1"/>
    <property type="RefSeq nucleotide sequence ID" value="NM_001308426.2"/>
    <property type="RefSeq protein sequence ID" value="NP_001295355.1"/>
</dbReference>
<dbReference type="UCSC" id="uc003cso.4">
    <molecule id="O75414-1"/>
    <property type="organism name" value="human"/>
</dbReference>
<dbReference type="AGR" id="HGNC:20567"/>
<dbReference type="CTD" id="10201"/>
<dbReference type="DisGeNET" id="10201"/>
<dbReference type="GeneCards" id="NME6"/>
<dbReference type="HGNC" id="HGNC:20567">
    <property type="gene designation" value="NME6"/>
</dbReference>
<dbReference type="HPA" id="ENSG00000172113">
    <property type="expression patterns" value="Low tissue specificity"/>
</dbReference>
<dbReference type="MIM" id="608294">
    <property type="type" value="gene"/>
</dbReference>
<dbReference type="neXtProt" id="NX_O75414"/>
<dbReference type="OpenTargets" id="ENSG00000172113"/>
<dbReference type="PharmGKB" id="PA134873104"/>
<dbReference type="VEuPathDB" id="HostDB:ENSG00000172113"/>
<dbReference type="eggNOG" id="KOG0888">
    <property type="taxonomic scope" value="Eukaryota"/>
</dbReference>
<dbReference type="GeneTree" id="ENSGT00940000160284"/>
<dbReference type="HOGENOM" id="CLU_2060685_0_0_1"/>
<dbReference type="InParanoid" id="O75414"/>
<dbReference type="OrthoDB" id="25346at2759"/>
<dbReference type="PAN-GO" id="O75414">
    <property type="GO annotations" value="4 GO annotations based on evolutionary models"/>
</dbReference>
<dbReference type="PhylomeDB" id="O75414"/>
<dbReference type="TreeFam" id="TF354225"/>
<dbReference type="PathwayCommons" id="O75414"/>
<dbReference type="SignaLink" id="O75414"/>
<dbReference type="BioGRID-ORCS" id="10201">
    <property type="hits" value="115 hits in 1171 CRISPR screens"/>
</dbReference>
<dbReference type="ChiTaRS" id="NME6">
    <property type="organism name" value="human"/>
</dbReference>
<dbReference type="GenomeRNAi" id="10201"/>
<dbReference type="Pharos" id="O75414">
    <property type="development level" value="Tbio"/>
</dbReference>
<dbReference type="PRO" id="PR:O75414"/>
<dbReference type="Proteomes" id="UP000005640">
    <property type="component" value="Chromosome 3"/>
</dbReference>
<dbReference type="RNAct" id="O75414">
    <property type="molecule type" value="protein"/>
</dbReference>
<dbReference type="Bgee" id="ENSG00000172113">
    <property type="expression patterns" value="Expressed in primordial germ cell in gonad and 152 other cell types or tissues"/>
</dbReference>
<dbReference type="ExpressionAtlas" id="O75414">
    <property type="expression patterns" value="baseline and differential"/>
</dbReference>
<dbReference type="GO" id="GO:0005743">
    <property type="term" value="C:mitochondrial inner membrane"/>
    <property type="evidence" value="ECO:0000314"/>
    <property type="project" value="UniProtKB"/>
</dbReference>
<dbReference type="GO" id="GO:0005759">
    <property type="term" value="C:mitochondrial matrix"/>
    <property type="evidence" value="ECO:0000314"/>
    <property type="project" value="UniProtKB"/>
</dbReference>
<dbReference type="GO" id="GO:0005739">
    <property type="term" value="C:mitochondrion"/>
    <property type="evidence" value="ECO:0000314"/>
    <property type="project" value="UniProtKB"/>
</dbReference>
<dbReference type="GO" id="GO:0005524">
    <property type="term" value="F:ATP binding"/>
    <property type="evidence" value="ECO:0007669"/>
    <property type="project" value="UniProtKB-KW"/>
</dbReference>
<dbReference type="GO" id="GO:0046872">
    <property type="term" value="F:metal ion binding"/>
    <property type="evidence" value="ECO:0007669"/>
    <property type="project" value="UniProtKB-KW"/>
</dbReference>
<dbReference type="GO" id="GO:0004550">
    <property type="term" value="F:nucleoside diphosphate kinase activity"/>
    <property type="evidence" value="ECO:0000314"/>
    <property type="project" value="UniProtKB"/>
</dbReference>
<dbReference type="GO" id="GO:0006915">
    <property type="term" value="P:apoptotic process"/>
    <property type="evidence" value="ECO:0007669"/>
    <property type="project" value="UniProtKB-KW"/>
</dbReference>
<dbReference type="GO" id="GO:0006241">
    <property type="term" value="P:CTP biosynthetic process"/>
    <property type="evidence" value="ECO:0007669"/>
    <property type="project" value="InterPro"/>
</dbReference>
<dbReference type="GO" id="GO:0006183">
    <property type="term" value="P:GTP biosynthetic process"/>
    <property type="evidence" value="ECO:0007669"/>
    <property type="project" value="InterPro"/>
</dbReference>
<dbReference type="GO" id="GO:0030308">
    <property type="term" value="P:negative regulation of cell growth"/>
    <property type="evidence" value="ECO:0000314"/>
    <property type="project" value="UniProtKB"/>
</dbReference>
<dbReference type="GO" id="GO:0045839">
    <property type="term" value="P:negative regulation of mitotic nuclear division"/>
    <property type="evidence" value="ECO:0000314"/>
    <property type="project" value="UniProtKB"/>
</dbReference>
<dbReference type="GO" id="GO:0006228">
    <property type="term" value="P:UTP biosynthetic process"/>
    <property type="evidence" value="ECO:0007669"/>
    <property type="project" value="InterPro"/>
</dbReference>
<dbReference type="CDD" id="cd04414">
    <property type="entry name" value="NDPk6"/>
    <property type="match status" value="1"/>
</dbReference>
<dbReference type="FunFam" id="3.30.70.141:FF:000006">
    <property type="entry name" value="Nucleoside diphosphate kinase"/>
    <property type="match status" value="1"/>
</dbReference>
<dbReference type="Gene3D" id="3.30.70.141">
    <property type="entry name" value="Nucleoside diphosphate kinase-like domain"/>
    <property type="match status" value="1"/>
</dbReference>
<dbReference type="InterPro" id="IPR034907">
    <property type="entry name" value="NDK-like_dom"/>
</dbReference>
<dbReference type="InterPro" id="IPR036850">
    <property type="entry name" value="NDK-like_dom_sf"/>
</dbReference>
<dbReference type="InterPro" id="IPR037994">
    <property type="entry name" value="NDPk6"/>
</dbReference>
<dbReference type="InterPro" id="IPR001564">
    <property type="entry name" value="Nucleoside_diP_kinase"/>
</dbReference>
<dbReference type="InterPro" id="IPR023005">
    <property type="entry name" value="Nucleoside_diP_kinase_AS"/>
</dbReference>
<dbReference type="PANTHER" id="PTHR46956">
    <property type="entry name" value="NUCLEOSIDE DIPHOSPHATE KINASE 6"/>
    <property type="match status" value="1"/>
</dbReference>
<dbReference type="PANTHER" id="PTHR46956:SF1">
    <property type="entry name" value="NUCLEOSIDE DIPHOSPHATE KINASE 6"/>
    <property type="match status" value="1"/>
</dbReference>
<dbReference type="Pfam" id="PF00334">
    <property type="entry name" value="NDK"/>
    <property type="match status" value="1"/>
</dbReference>
<dbReference type="PRINTS" id="PR01243">
    <property type="entry name" value="NUCDPKINASE"/>
</dbReference>
<dbReference type="SMART" id="SM00562">
    <property type="entry name" value="NDK"/>
    <property type="match status" value="1"/>
</dbReference>
<dbReference type="SUPFAM" id="SSF54919">
    <property type="entry name" value="Nucleoside diphosphate kinase, NDK"/>
    <property type="match status" value="1"/>
</dbReference>
<dbReference type="PROSITE" id="PS00469">
    <property type="entry name" value="NDPK"/>
    <property type="match status" value="1"/>
</dbReference>
<dbReference type="PROSITE" id="PS51374">
    <property type="entry name" value="NDPK_LIKE"/>
    <property type="match status" value="1"/>
</dbReference>
<name>NDK6_HUMAN</name>
<organism>
    <name type="scientific">Homo sapiens</name>
    <name type="common">Human</name>
    <dbReference type="NCBI Taxonomy" id="9606"/>
    <lineage>
        <taxon>Eukaryota</taxon>
        <taxon>Metazoa</taxon>
        <taxon>Chordata</taxon>
        <taxon>Craniata</taxon>
        <taxon>Vertebrata</taxon>
        <taxon>Euteleostomi</taxon>
        <taxon>Mammalia</taxon>
        <taxon>Eutheria</taxon>
        <taxon>Euarchontoglires</taxon>
        <taxon>Primates</taxon>
        <taxon>Haplorrhini</taxon>
        <taxon>Catarrhini</taxon>
        <taxon>Hominidae</taxon>
        <taxon>Homo</taxon>
    </lineage>
</organism>
<reference key="1">
    <citation type="journal article" date="1999" name="Hum. Genet.">
        <title>NME6: a new member of the nm23/nucleoside diphosphate kinase gene family located on human chromosome 3p21.3.</title>
        <authorList>
            <person name="Mehus J.G."/>
            <person name="Deloukas P."/>
            <person name="Lambeth D.O."/>
        </authorList>
    </citation>
    <scope>NUCLEOTIDE SEQUENCE [MRNA] (ISOFORM 1)</scope>
    <source>
        <tissue>Liver</tissue>
    </source>
</reference>
<reference key="2">
    <citation type="submission" date="1997-02" db="EMBL/GenBank/DDBJ databases">
        <title>Identification of a gene that inhibits p53-induced apoptosis.</title>
        <authorList>
            <person name="Nakamura H."/>
            <person name="Tsuiki H."/>
            <person name="Honda Y."/>
            <person name="Sasaki J."/>
            <person name="Masuko N."/>
            <person name="Akagi K."/>
            <person name="Saya H."/>
        </authorList>
    </citation>
    <scope>NUCLEOTIDE SEQUENCE [MRNA] (ISOFORM 1)</scope>
</reference>
<reference key="3">
    <citation type="journal article" date="2004" name="Nat. Genet.">
        <title>Complete sequencing and characterization of 21,243 full-length human cDNAs.</title>
        <authorList>
            <person name="Ota T."/>
            <person name="Suzuki Y."/>
            <person name="Nishikawa T."/>
            <person name="Otsuki T."/>
            <person name="Sugiyama T."/>
            <person name="Irie R."/>
            <person name="Wakamatsu A."/>
            <person name="Hayashi K."/>
            <person name="Sato H."/>
            <person name="Nagai K."/>
            <person name="Kimura K."/>
            <person name="Makita H."/>
            <person name="Sekine M."/>
            <person name="Obayashi M."/>
            <person name="Nishi T."/>
            <person name="Shibahara T."/>
            <person name="Tanaka T."/>
            <person name="Ishii S."/>
            <person name="Yamamoto J."/>
            <person name="Saito K."/>
            <person name="Kawai Y."/>
            <person name="Isono Y."/>
            <person name="Nakamura Y."/>
            <person name="Nagahari K."/>
            <person name="Murakami K."/>
            <person name="Yasuda T."/>
            <person name="Iwayanagi T."/>
            <person name="Wagatsuma M."/>
            <person name="Shiratori A."/>
            <person name="Sudo H."/>
            <person name="Hosoiri T."/>
            <person name="Kaku Y."/>
            <person name="Kodaira H."/>
            <person name="Kondo H."/>
            <person name="Sugawara M."/>
            <person name="Takahashi M."/>
            <person name="Kanda K."/>
            <person name="Yokoi T."/>
            <person name="Furuya T."/>
            <person name="Kikkawa E."/>
            <person name="Omura Y."/>
            <person name="Abe K."/>
            <person name="Kamihara K."/>
            <person name="Katsuta N."/>
            <person name="Sato K."/>
            <person name="Tanikawa M."/>
            <person name="Yamazaki M."/>
            <person name="Ninomiya K."/>
            <person name="Ishibashi T."/>
            <person name="Yamashita H."/>
            <person name="Murakawa K."/>
            <person name="Fujimori K."/>
            <person name="Tanai H."/>
            <person name="Kimata M."/>
            <person name="Watanabe M."/>
            <person name="Hiraoka S."/>
            <person name="Chiba Y."/>
            <person name="Ishida S."/>
            <person name="Ono Y."/>
            <person name="Takiguchi S."/>
            <person name="Watanabe S."/>
            <person name="Yosida M."/>
            <person name="Hotuta T."/>
            <person name="Kusano J."/>
            <person name="Kanehori K."/>
            <person name="Takahashi-Fujii A."/>
            <person name="Hara H."/>
            <person name="Tanase T.-O."/>
            <person name="Nomura Y."/>
            <person name="Togiya S."/>
            <person name="Komai F."/>
            <person name="Hara R."/>
            <person name="Takeuchi K."/>
            <person name="Arita M."/>
            <person name="Imose N."/>
            <person name="Musashino K."/>
            <person name="Yuuki H."/>
            <person name="Oshima A."/>
            <person name="Sasaki N."/>
            <person name="Aotsuka S."/>
            <person name="Yoshikawa Y."/>
            <person name="Matsunawa H."/>
            <person name="Ichihara T."/>
            <person name="Shiohata N."/>
            <person name="Sano S."/>
            <person name="Moriya S."/>
            <person name="Momiyama H."/>
            <person name="Satoh N."/>
            <person name="Takami S."/>
            <person name="Terashima Y."/>
            <person name="Suzuki O."/>
            <person name="Nakagawa S."/>
            <person name="Senoh A."/>
            <person name="Mizoguchi H."/>
            <person name="Goto Y."/>
            <person name="Shimizu F."/>
            <person name="Wakebe H."/>
            <person name="Hishigaki H."/>
            <person name="Watanabe T."/>
            <person name="Sugiyama A."/>
            <person name="Takemoto M."/>
            <person name="Kawakami B."/>
            <person name="Yamazaki M."/>
            <person name="Watanabe K."/>
            <person name="Kumagai A."/>
            <person name="Itakura S."/>
            <person name="Fukuzumi Y."/>
            <person name="Fujimori Y."/>
            <person name="Komiyama M."/>
            <person name="Tashiro H."/>
            <person name="Tanigami A."/>
            <person name="Fujiwara T."/>
            <person name="Ono T."/>
            <person name="Yamada K."/>
            <person name="Fujii Y."/>
            <person name="Ozaki K."/>
            <person name="Hirao M."/>
            <person name="Ohmori Y."/>
            <person name="Kawabata A."/>
            <person name="Hikiji T."/>
            <person name="Kobatake N."/>
            <person name="Inagaki H."/>
            <person name="Ikema Y."/>
            <person name="Okamoto S."/>
            <person name="Okitani R."/>
            <person name="Kawakami T."/>
            <person name="Noguchi S."/>
            <person name="Itoh T."/>
            <person name="Shigeta K."/>
            <person name="Senba T."/>
            <person name="Matsumura K."/>
            <person name="Nakajima Y."/>
            <person name="Mizuno T."/>
            <person name="Morinaga M."/>
            <person name="Sasaki M."/>
            <person name="Togashi T."/>
            <person name="Oyama M."/>
            <person name="Hata H."/>
            <person name="Watanabe M."/>
            <person name="Komatsu T."/>
            <person name="Mizushima-Sugano J."/>
            <person name="Satoh T."/>
            <person name="Shirai Y."/>
            <person name="Takahashi Y."/>
            <person name="Nakagawa K."/>
            <person name="Okumura K."/>
            <person name="Nagase T."/>
            <person name="Nomura N."/>
            <person name="Kikuchi H."/>
            <person name="Masuho Y."/>
            <person name="Yamashita R."/>
            <person name="Nakai K."/>
            <person name="Yada T."/>
            <person name="Nakamura Y."/>
            <person name="Ohara O."/>
            <person name="Isogai T."/>
            <person name="Sugano S."/>
        </authorList>
    </citation>
    <scope>NUCLEOTIDE SEQUENCE [LARGE SCALE MRNA] (ISOFORMS 2 AND 3)</scope>
    <source>
        <tissue>Brain</tissue>
    </source>
</reference>
<reference key="4">
    <citation type="submission" date="2005-04" db="EMBL/GenBank/DDBJ databases">
        <authorList>
            <person name="Suzuki Y."/>
            <person name="Sugano S."/>
            <person name="Totoki Y."/>
            <person name="Toyoda A."/>
            <person name="Takeda T."/>
            <person name="Sakaki Y."/>
            <person name="Tanaka A."/>
            <person name="Yokoyama S."/>
        </authorList>
    </citation>
    <scope>NUCLEOTIDE SEQUENCE [LARGE SCALE MRNA] (ISOFORM 1)</scope>
    <source>
        <tissue>Coronary artery</tissue>
    </source>
</reference>
<reference key="5">
    <citation type="journal article" date="2006" name="Nature">
        <title>The DNA sequence, annotation and analysis of human chromosome 3.</title>
        <authorList>
            <person name="Muzny D.M."/>
            <person name="Scherer S.E."/>
            <person name="Kaul R."/>
            <person name="Wang J."/>
            <person name="Yu J."/>
            <person name="Sudbrak R."/>
            <person name="Buhay C.J."/>
            <person name="Chen R."/>
            <person name="Cree A."/>
            <person name="Ding Y."/>
            <person name="Dugan-Rocha S."/>
            <person name="Gill R."/>
            <person name="Gunaratne P."/>
            <person name="Harris R.A."/>
            <person name="Hawes A.C."/>
            <person name="Hernandez J."/>
            <person name="Hodgson A.V."/>
            <person name="Hume J."/>
            <person name="Jackson A."/>
            <person name="Khan Z.M."/>
            <person name="Kovar-Smith C."/>
            <person name="Lewis L.R."/>
            <person name="Lozado R.J."/>
            <person name="Metzker M.L."/>
            <person name="Milosavljevic A."/>
            <person name="Miner G.R."/>
            <person name="Morgan M.B."/>
            <person name="Nazareth L.V."/>
            <person name="Scott G."/>
            <person name="Sodergren E."/>
            <person name="Song X.-Z."/>
            <person name="Steffen D."/>
            <person name="Wei S."/>
            <person name="Wheeler D.A."/>
            <person name="Wright M.W."/>
            <person name="Worley K.C."/>
            <person name="Yuan Y."/>
            <person name="Zhang Z."/>
            <person name="Adams C.Q."/>
            <person name="Ansari-Lari M.A."/>
            <person name="Ayele M."/>
            <person name="Brown M.J."/>
            <person name="Chen G."/>
            <person name="Chen Z."/>
            <person name="Clendenning J."/>
            <person name="Clerc-Blankenburg K.P."/>
            <person name="Chen R."/>
            <person name="Chen Z."/>
            <person name="Davis C."/>
            <person name="Delgado O."/>
            <person name="Dinh H.H."/>
            <person name="Dong W."/>
            <person name="Draper H."/>
            <person name="Ernst S."/>
            <person name="Fu G."/>
            <person name="Gonzalez-Garay M.L."/>
            <person name="Garcia D.K."/>
            <person name="Gillett W."/>
            <person name="Gu J."/>
            <person name="Hao B."/>
            <person name="Haugen E."/>
            <person name="Havlak P."/>
            <person name="He X."/>
            <person name="Hennig S."/>
            <person name="Hu S."/>
            <person name="Huang W."/>
            <person name="Jackson L.R."/>
            <person name="Jacob L.S."/>
            <person name="Kelly S.H."/>
            <person name="Kube M."/>
            <person name="Levy R."/>
            <person name="Li Z."/>
            <person name="Liu B."/>
            <person name="Liu J."/>
            <person name="Liu W."/>
            <person name="Lu J."/>
            <person name="Maheshwari M."/>
            <person name="Nguyen B.-V."/>
            <person name="Okwuonu G.O."/>
            <person name="Palmeiri A."/>
            <person name="Pasternak S."/>
            <person name="Perez L.M."/>
            <person name="Phelps K.A."/>
            <person name="Plopper F.J."/>
            <person name="Qiang B."/>
            <person name="Raymond C."/>
            <person name="Rodriguez R."/>
            <person name="Saenphimmachak C."/>
            <person name="Santibanez J."/>
            <person name="Shen H."/>
            <person name="Shen Y."/>
            <person name="Subramanian S."/>
            <person name="Tabor P.E."/>
            <person name="Verduzco D."/>
            <person name="Waldron L."/>
            <person name="Wang J."/>
            <person name="Wang J."/>
            <person name="Wang Q."/>
            <person name="Williams G.A."/>
            <person name="Wong G.K.-S."/>
            <person name="Yao Z."/>
            <person name="Zhang J."/>
            <person name="Zhang X."/>
            <person name="Zhao G."/>
            <person name="Zhou J."/>
            <person name="Zhou Y."/>
            <person name="Nelson D."/>
            <person name="Lehrach H."/>
            <person name="Reinhardt R."/>
            <person name="Naylor S.L."/>
            <person name="Yang H."/>
            <person name="Olson M."/>
            <person name="Weinstock G."/>
            <person name="Gibbs R.A."/>
        </authorList>
    </citation>
    <scope>NUCLEOTIDE SEQUENCE [LARGE SCALE GENOMIC DNA]</scope>
</reference>
<reference key="6">
    <citation type="journal article" date="2004" name="Genome Res.">
        <title>The status, quality, and expansion of the NIH full-length cDNA project: the Mammalian Gene Collection (MGC).</title>
        <authorList>
            <consortium name="The MGC Project Team"/>
        </authorList>
    </citation>
    <scope>NUCLEOTIDE SEQUENCE [LARGE SCALE MRNA] (ISOFORM 1)</scope>
    <source>
        <tissue>Lymph</tissue>
    </source>
</reference>
<reference key="7">
    <citation type="journal article" date="2011" name="BMC Syst. Biol.">
        <title>Initial characterization of the human central proteome.</title>
        <authorList>
            <person name="Burkard T.R."/>
            <person name="Planyavsky M."/>
            <person name="Kaupe I."/>
            <person name="Breitwieser F.P."/>
            <person name="Buerckstuemmer T."/>
            <person name="Bennett K.L."/>
            <person name="Superti-Furga G."/>
            <person name="Colinge J."/>
        </authorList>
    </citation>
    <scope>IDENTIFICATION BY MASS SPECTROMETRY [LARGE SCALE ANALYSIS]</scope>
</reference>
<reference key="8">
    <citation type="journal article" date="2015" name="Proteomics">
        <title>N-terminome analysis of the human mitochondrial proteome.</title>
        <authorList>
            <person name="Vaca Jacome A.S."/>
            <person name="Rabilloud T."/>
            <person name="Schaeffer-Reiss C."/>
            <person name="Rompais M."/>
            <person name="Ayoub D."/>
            <person name="Lane L."/>
            <person name="Bairoch A."/>
            <person name="Van Dorsselaer A."/>
            <person name="Carapito C."/>
        </authorList>
    </citation>
    <scope>IDENTIFICATION BY MASS SPECTROMETRY [LARGE SCALE ANALYSIS]</scope>
</reference>
<protein>
    <recommendedName>
        <fullName>Nucleoside diphosphate kinase 6</fullName>
        <shortName>NDK 6</shortName>
        <shortName>NDP kinase 6</shortName>
        <ecNumber>2.7.4.6</ecNumber>
    </recommendedName>
    <alternativeName>
        <fullName>Inhibitor of p53-induced apoptosis-alpha</fullName>
        <shortName>IPIA-alpha</shortName>
    </alternativeName>
    <alternativeName>
        <fullName>nm23-H6</fullName>
    </alternativeName>
</protein>
<accession>O75414</accession>
<accession>B4DGW7</accession>
<accession>B4DM99</accession>
<accession>Q53HM5</accession>
<accession>Q96E73</accession>
<accession>Q9BQ63</accession>
<gene>
    <name type="primary">NME6</name>
</gene>
<sequence>MASILRSPQALQLTLALIKPDAVAHPLILEAVHQQILSNKFLIVRMRELLWRKEDCQRFYREHEGRFFYQRLVEFMASGPIRAYILAHKDAIQLWRTLMGPTRVFRARHVAPDSIRGSFGLTDTRNTTHGSDSVVSASREIAAFFPDFSEQRWYEEEEPQLRCGPVCYSPEGGVHYVAGTGGLGPA</sequence>
<proteinExistence type="evidence at protein level"/>